<proteinExistence type="evidence at protein level"/>
<name>FER2_DESMC</name>
<evidence type="ECO:0000255" key="1">
    <source>
        <dbReference type="PROSITE-ProRule" id="PRU00465"/>
    </source>
</evidence>
<evidence type="ECO:0000269" key="2">
    <source>
    </source>
</evidence>
<evidence type="ECO:0000305" key="3"/>
<comment type="function">
    <text>Ferredoxins are iron-sulfur proteins that transfer electrons in a wide variety of metabolic reactions.</text>
</comment>
<comment type="cofactor">
    <cofactor>
        <name>[2Fe-2S] cluster</name>
        <dbReference type="ChEBI" id="CHEBI:190135"/>
    </cofactor>
    <text>Binds 1 [2Fe-2S] cluster.</text>
</comment>
<comment type="similarity">
    <text evidence="3">Belongs to the 2Fe2S plant-type ferredoxin family.</text>
</comment>
<dbReference type="PIR" id="A00253">
    <property type="entry name" value="FENM2M"/>
</dbReference>
<dbReference type="SMR" id="P00249"/>
<dbReference type="GO" id="GO:0051537">
    <property type="term" value="F:2 iron, 2 sulfur cluster binding"/>
    <property type="evidence" value="ECO:0007669"/>
    <property type="project" value="UniProtKB-KW"/>
</dbReference>
<dbReference type="GO" id="GO:0009055">
    <property type="term" value="F:electron transfer activity"/>
    <property type="evidence" value="ECO:0007669"/>
    <property type="project" value="InterPro"/>
</dbReference>
<dbReference type="GO" id="GO:0046872">
    <property type="term" value="F:metal ion binding"/>
    <property type="evidence" value="ECO:0007669"/>
    <property type="project" value="UniProtKB-KW"/>
</dbReference>
<dbReference type="GO" id="GO:0022900">
    <property type="term" value="P:electron transport chain"/>
    <property type="evidence" value="ECO:0007669"/>
    <property type="project" value="InterPro"/>
</dbReference>
<dbReference type="CDD" id="cd00207">
    <property type="entry name" value="fer2"/>
    <property type="match status" value="1"/>
</dbReference>
<dbReference type="FunFam" id="3.10.20.30:FF:000014">
    <property type="entry name" value="Ferredoxin"/>
    <property type="match status" value="1"/>
</dbReference>
<dbReference type="Gene3D" id="3.10.20.30">
    <property type="match status" value="1"/>
</dbReference>
<dbReference type="InterPro" id="IPR036010">
    <property type="entry name" value="2Fe-2S_ferredoxin-like_sf"/>
</dbReference>
<dbReference type="InterPro" id="IPR001041">
    <property type="entry name" value="2Fe-2S_ferredoxin-type"/>
</dbReference>
<dbReference type="InterPro" id="IPR006058">
    <property type="entry name" value="2Fe2S_fd_BS"/>
</dbReference>
<dbReference type="InterPro" id="IPR012675">
    <property type="entry name" value="Beta-grasp_dom_sf"/>
</dbReference>
<dbReference type="InterPro" id="IPR010241">
    <property type="entry name" value="Fd_pln"/>
</dbReference>
<dbReference type="NCBIfam" id="TIGR02008">
    <property type="entry name" value="fdx_plant"/>
    <property type="match status" value="1"/>
</dbReference>
<dbReference type="PANTHER" id="PTHR43112">
    <property type="entry name" value="FERREDOXIN"/>
    <property type="match status" value="1"/>
</dbReference>
<dbReference type="PANTHER" id="PTHR43112:SF3">
    <property type="entry name" value="FERREDOXIN-2, CHLOROPLASTIC"/>
    <property type="match status" value="1"/>
</dbReference>
<dbReference type="Pfam" id="PF00111">
    <property type="entry name" value="Fer2"/>
    <property type="match status" value="1"/>
</dbReference>
<dbReference type="SUPFAM" id="SSF54292">
    <property type="entry name" value="2Fe-2S ferredoxin-like"/>
    <property type="match status" value="1"/>
</dbReference>
<dbReference type="PROSITE" id="PS00197">
    <property type="entry name" value="2FE2S_FER_1"/>
    <property type="match status" value="1"/>
</dbReference>
<dbReference type="PROSITE" id="PS51085">
    <property type="entry name" value="2FE2S_FER_2"/>
    <property type="match status" value="1"/>
</dbReference>
<keyword id="KW-0001">2Fe-2S</keyword>
<keyword id="KW-0903">Direct protein sequencing</keyword>
<keyword id="KW-0249">Electron transport</keyword>
<keyword id="KW-0408">Iron</keyword>
<keyword id="KW-0411">Iron-sulfur</keyword>
<keyword id="KW-0479">Metal-binding</keyword>
<keyword id="KW-0813">Transport</keyword>
<organism>
    <name type="scientific">Desmonostoc muscorum</name>
    <name type="common">Nostoc muscorum</name>
    <dbReference type="NCBI Taxonomy" id="1179"/>
    <lineage>
        <taxon>Bacteria</taxon>
        <taxon>Bacillati</taxon>
        <taxon>Cyanobacteriota</taxon>
        <taxon>Cyanophyceae</taxon>
        <taxon>Nostocales</taxon>
        <taxon>Nostocaceae</taxon>
        <taxon>Desmonostoc</taxon>
    </lineage>
</organism>
<accession>P00249</accession>
<protein>
    <recommendedName>
        <fullName>Ferredoxin-2</fullName>
    </recommendedName>
    <alternativeName>
        <fullName>Ferredoxin II</fullName>
    </alternativeName>
</protein>
<feature type="initiator methionine" description="Removed" evidence="2">
    <location>
        <position position="1"/>
    </location>
</feature>
<feature type="chain" id="PRO_0000189344" description="Ferredoxin-2">
    <location>
        <begin position="2"/>
        <end position="99"/>
    </location>
</feature>
<feature type="domain" description="2Fe-2S ferredoxin-type" evidence="1">
    <location>
        <begin position="4"/>
        <end position="96"/>
    </location>
</feature>
<feature type="binding site">
    <location>
        <position position="42"/>
    </location>
    <ligand>
        <name>[2Fe-2S] cluster</name>
        <dbReference type="ChEBI" id="CHEBI:190135"/>
    </ligand>
</feature>
<feature type="binding site">
    <location>
        <position position="47"/>
    </location>
    <ligand>
        <name>[2Fe-2S] cluster</name>
        <dbReference type="ChEBI" id="CHEBI:190135"/>
    </ligand>
</feature>
<feature type="binding site">
    <location>
        <position position="50"/>
    </location>
    <ligand>
        <name>[2Fe-2S] cluster</name>
        <dbReference type="ChEBI" id="CHEBI:190135"/>
    </ligand>
</feature>
<feature type="binding site">
    <location>
        <position position="80"/>
    </location>
    <ligand>
        <name>[2Fe-2S] cluster</name>
        <dbReference type="ChEBI" id="CHEBI:190135"/>
    </ligand>
</feature>
<sequence length="99" mass="10681">MATYKVRLFNAAEGLDETIEVPDDEYILDAAEEAGLDLPFSCRSGSCSSCNGILKKGTVDQSDQNFLDDDQIAAGNVLTCVAYPTSNCEIETHREDAIA</sequence>
<reference key="1">
    <citation type="journal article" date="1982" name="J. Biochem.">
        <title>Amino acid sequences of Nostoc strain MAC ferredoxins I and II.</title>
        <authorList>
            <person name="Hase T."/>
            <person name="Matsubara H."/>
            <person name="Hutber G.N."/>
            <person name="Rogers L.J."/>
        </authorList>
    </citation>
    <scope>PROTEIN SEQUENCE OF 2-99</scope>
    <source>
        <strain>MAC</strain>
    </source>
</reference>